<reference key="1">
    <citation type="journal article" date="2002" name="Proc. Natl. Acad. Sci. U.S.A.">
        <title>Genome sequence of a serotype M3 strain of group A Streptococcus: phage-encoded toxins, the high-virulence phenotype, and clone emergence.</title>
        <authorList>
            <person name="Beres S.B."/>
            <person name="Sylva G.L."/>
            <person name="Barbian K.D."/>
            <person name="Lei B."/>
            <person name="Hoff J.S."/>
            <person name="Mammarella N.D."/>
            <person name="Liu M.-Y."/>
            <person name="Smoot J.C."/>
            <person name="Porcella S.F."/>
            <person name="Parkins L.D."/>
            <person name="Campbell D.S."/>
            <person name="Smith T.M."/>
            <person name="McCormick J.K."/>
            <person name="Leung D.Y.M."/>
            <person name="Schlievert P.M."/>
            <person name="Musser J.M."/>
        </authorList>
    </citation>
    <scope>NUCLEOTIDE SEQUENCE [LARGE SCALE GENOMIC DNA]</scope>
    <source>
        <strain>ATCC BAA-595 / MGAS315</strain>
    </source>
</reference>
<dbReference type="EMBL" id="AE014074">
    <property type="protein sequence ID" value="AAM78653.1"/>
    <property type="status" value="ALT_INIT"/>
    <property type="molecule type" value="Genomic_DNA"/>
</dbReference>
<dbReference type="RefSeq" id="WP_000529929.1">
    <property type="nucleotide sequence ID" value="NC_004070.1"/>
</dbReference>
<dbReference type="SMR" id="P0DE90"/>
<dbReference type="GeneID" id="69900032"/>
<dbReference type="KEGG" id="spg:SpyM3_0046"/>
<dbReference type="HOGENOM" id="CLU_058591_0_2_9"/>
<dbReference type="Proteomes" id="UP000000564">
    <property type="component" value="Chromosome"/>
</dbReference>
<dbReference type="GO" id="GO:0022627">
    <property type="term" value="C:cytosolic small ribosomal subunit"/>
    <property type="evidence" value="ECO:0007669"/>
    <property type="project" value="TreeGrafter"/>
</dbReference>
<dbReference type="GO" id="GO:0003729">
    <property type="term" value="F:mRNA binding"/>
    <property type="evidence" value="ECO:0007669"/>
    <property type="project" value="UniProtKB-UniRule"/>
</dbReference>
<dbReference type="GO" id="GO:0019843">
    <property type="term" value="F:rRNA binding"/>
    <property type="evidence" value="ECO:0007669"/>
    <property type="project" value="UniProtKB-UniRule"/>
</dbReference>
<dbReference type="GO" id="GO:0003735">
    <property type="term" value="F:structural constituent of ribosome"/>
    <property type="evidence" value="ECO:0007669"/>
    <property type="project" value="InterPro"/>
</dbReference>
<dbReference type="GO" id="GO:0006412">
    <property type="term" value="P:translation"/>
    <property type="evidence" value="ECO:0007669"/>
    <property type="project" value="UniProtKB-UniRule"/>
</dbReference>
<dbReference type="CDD" id="cd02412">
    <property type="entry name" value="KH-II_30S_S3"/>
    <property type="match status" value="1"/>
</dbReference>
<dbReference type="FunFam" id="3.30.1140.32:FF:000001">
    <property type="entry name" value="30S ribosomal protein S3"/>
    <property type="match status" value="1"/>
</dbReference>
<dbReference type="FunFam" id="3.30.300.20:FF:000001">
    <property type="entry name" value="30S ribosomal protein S3"/>
    <property type="match status" value="1"/>
</dbReference>
<dbReference type="Gene3D" id="3.30.300.20">
    <property type="match status" value="1"/>
</dbReference>
<dbReference type="Gene3D" id="3.30.1140.32">
    <property type="entry name" value="Ribosomal protein S3, C-terminal domain"/>
    <property type="match status" value="1"/>
</dbReference>
<dbReference type="HAMAP" id="MF_01309_B">
    <property type="entry name" value="Ribosomal_uS3_B"/>
    <property type="match status" value="1"/>
</dbReference>
<dbReference type="InterPro" id="IPR004087">
    <property type="entry name" value="KH_dom"/>
</dbReference>
<dbReference type="InterPro" id="IPR015946">
    <property type="entry name" value="KH_dom-like_a/b"/>
</dbReference>
<dbReference type="InterPro" id="IPR004044">
    <property type="entry name" value="KH_dom_type_2"/>
</dbReference>
<dbReference type="InterPro" id="IPR009019">
    <property type="entry name" value="KH_sf_prok-type"/>
</dbReference>
<dbReference type="InterPro" id="IPR036419">
    <property type="entry name" value="Ribosomal_S3_C_sf"/>
</dbReference>
<dbReference type="InterPro" id="IPR005704">
    <property type="entry name" value="Ribosomal_uS3_bac-typ"/>
</dbReference>
<dbReference type="InterPro" id="IPR001351">
    <property type="entry name" value="Ribosomal_uS3_C"/>
</dbReference>
<dbReference type="InterPro" id="IPR018280">
    <property type="entry name" value="Ribosomal_uS3_CS"/>
</dbReference>
<dbReference type="NCBIfam" id="TIGR01009">
    <property type="entry name" value="rpsC_bact"/>
    <property type="match status" value="1"/>
</dbReference>
<dbReference type="PANTHER" id="PTHR11760">
    <property type="entry name" value="30S/40S RIBOSOMAL PROTEIN S3"/>
    <property type="match status" value="1"/>
</dbReference>
<dbReference type="PANTHER" id="PTHR11760:SF19">
    <property type="entry name" value="SMALL RIBOSOMAL SUBUNIT PROTEIN US3C"/>
    <property type="match status" value="1"/>
</dbReference>
<dbReference type="Pfam" id="PF07650">
    <property type="entry name" value="KH_2"/>
    <property type="match status" value="1"/>
</dbReference>
<dbReference type="Pfam" id="PF00189">
    <property type="entry name" value="Ribosomal_S3_C"/>
    <property type="match status" value="1"/>
</dbReference>
<dbReference type="SMART" id="SM00322">
    <property type="entry name" value="KH"/>
    <property type="match status" value="1"/>
</dbReference>
<dbReference type="SUPFAM" id="SSF54814">
    <property type="entry name" value="Prokaryotic type KH domain (KH-domain type II)"/>
    <property type="match status" value="1"/>
</dbReference>
<dbReference type="SUPFAM" id="SSF54821">
    <property type="entry name" value="Ribosomal protein S3 C-terminal domain"/>
    <property type="match status" value="1"/>
</dbReference>
<dbReference type="PROSITE" id="PS50823">
    <property type="entry name" value="KH_TYPE_2"/>
    <property type="match status" value="1"/>
</dbReference>
<dbReference type="PROSITE" id="PS00548">
    <property type="entry name" value="RIBOSOMAL_S3"/>
    <property type="match status" value="1"/>
</dbReference>
<keyword id="KW-0687">Ribonucleoprotein</keyword>
<keyword id="KW-0689">Ribosomal protein</keyword>
<keyword id="KW-0694">RNA-binding</keyword>
<keyword id="KW-0699">rRNA-binding</keyword>
<comment type="function">
    <text evidence="1">Binds the lower part of the 30S subunit head. Binds mRNA in the 70S ribosome, positioning it for translation.</text>
</comment>
<comment type="subunit">
    <text evidence="1">Part of the 30S ribosomal subunit. Forms a tight complex with proteins S10 and S14.</text>
</comment>
<comment type="similarity">
    <text evidence="1">Belongs to the universal ribosomal protein uS3 family.</text>
</comment>
<comment type="sequence caution" evidence="2">
    <conflict type="erroneous initiation">
        <sequence resource="EMBL-CDS" id="AAM78653"/>
    </conflict>
</comment>
<protein>
    <recommendedName>
        <fullName evidence="1">Small ribosomal subunit protein uS3</fullName>
    </recommendedName>
    <alternativeName>
        <fullName evidence="2">30S ribosomal protein S3</fullName>
    </alternativeName>
</protein>
<proteinExistence type="inferred from homology"/>
<gene>
    <name evidence="1" type="primary">rpsC</name>
    <name type="ordered locus">SpyM3_0046</name>
</gene>
<feature type="chain" id="PRO_0000130211" description="Small ribosomal subunit protein uS3">
    <location>
        <begin position="1"/>
        <end position="217"/>
    </location>
</feature>
<feature type="domain" description="KH type-2" evidence="1">
    <location>
        <begin position="38"/>
        <end position="106"/>
    </location>
</feature>
<accession>P0DE90</accession>
<accession>P59185</accession>
<accession>P66556</accession>
<accession>Q8K8X2</accession>
<accession>Q9A1W8</accession>
<organism>
    <name type="scientific">Streptococcus pyogenes serotype M3 (strain ATCC BAA-595 / MGAS315)</name>
    <dbReference type="NCBI Taxonomy" id="198466"/>
    <lineage>
        <taxon>Bacteria</taxon>
        <taxon>Bacillati</taxon>
        <taxon>Bacillota</taxon>
        <taxon>Bacilli</taxon>
        <taxon>Lactobacillales</taxon>
        <taxon>Streptococcaceae</taxon>
        <taxon>Streptococcus</taxon>
    </lineage>
</organism>
<evidence type="ECO:0000255" key="1">
    <source>
        <dbReference type="HAMAP-Rule" id="MF_01309"/>
    </source>
</evidence>
<evidence type="ECO:0000305" key="2"/>
<sequence length="217" mass="24134">MGQKVHPIGMRVGIIRDWDAKWYAEKEYADYLHEDLAIRKFINKELADASVSTIEIERAVNKVIVSLHTAKPGMVIGKGGANVDALRGQLNKLTGKQVHINIIEIKQPDLDAHLVGENIARQLEQRVAFRRAQKQAIQRTMRAGAKGIKTQVSGRLNGADIARAEGYSEGTVPLHTLRADIDYAWEEADTTYGKLGVKVWIYRGEVLPARKNTKGGK</sequence>
<name>RS3_STRP3</name>